<accession>A0A286QZ36</accession>
<gene>
    <name evidence="6" type="primary">RAC1</name>
</gene>
<feature type="chain" id="PRO_0000444673" description="Ras-related protein Rac1">
    <location>
        <begin position="1"/>
        <end position="192"/>
    </location>
</feature>
<feature type="propeptide" id="PRO_0000444674" description="Removed in mature form" evidence="1">
    <location>
        <begin position="190"/>
        <end position="192"/>
    </location>
</feature>
<feature type="short sequence motif" description="Effector region" evidence="5">
    <location>
        <begin position="32"/>
        <end position="40"/>
    </location>
</feature>
<feature type="binding site" evidence="2">
    <location>
        <begin position="13"/>
        <end position="18"/>
    </location>
    <ligand>
        <name>GTP</name>
        <dbReference type="ChEBI" id="CHEBI:37565"/>
    </ligand>
</feature>
<feature type="binding site" evidence="2">
    <location>
        <begin position="30"/>
        <end position="35"/>
    </location>
    <ligand>
        <name>GTP</name>
        <dbReference type="ChEBI" id="CHEBI:37565"/>
    </ligand>
</feature>
<feature type="binding site" evidence="2">
    <location>
        <begin position="116"/>
        <end position="118"/>
    </location>
    <ligand>
        <name>GTP</name>
        <dbReference type="ChEBI" id="CHEBI:37565"/>
    </ligand>
</feature>
<feature type="binding site" evidence="2">
    <location>
        <begin position="159"/>
        <end position="160"/>
    </location>
    <ligand>
        <name>GTP</name>
        <dbReference type="ChEBI" id="CHEBI:37565"/>
    </ligand>
</feature>
<feature type="modified residue" description="Cysteine methyl ester" evidence="2">
    <location>
        <position position="189"/>
    </location>
</feature>
<feature type="lipid moiety-binding region" description="S-geranylgeranyl cysteine" evidence="2">
    <location>
        <position position="189"/>
    </location>
</feature>
<name>RAC1_STIJA</name>
<keyword id="KW-1003">Cell membrane</keyword>
<keyword id="KW-0342">GTP-binding</keyword>
<keyword id="KW-0449">Lipoprotein</keyword>
<keyword id="KW-0472">Membrane</keyword>
<keyword id="KW-0488">Methylation</keyword>
<keyword id="KW-0547">Nucleotide-binding</keyword>
<keyword id="KW-0636">Prenylation</keyword>
<protein>
    <recommendedName>
        <fullName evidence="5">Ras-related protein Rac1</fullName>
    </recommendedName>
    <alternativeName>
        <fullName evidence="4">AjRac1</fullName>
    </alternativeName>
</protein>
<evidence type="ECO:0000250" key="1">
    <source>
        <dbReference type="UniProtKB" id="P61586"/>
    </source>
</evidence>
<evidence type="ECO:0000250" key="2">
    <source>
        <dbReference type="UniProtKB" id="P63000"/>
    </source>
</evidence>
<evidence type="ECO:0000269" key="3">
    <source>
    </source>
</evidence>
<evidence type="ECO:0000303" key="4">
    <source>
    </source>
</evidence>
<evidence type="ECO:0000305" key="5"/>
<evidence type="ECO:0000312" key="6">
    <source>
        <dbReference type="EMBL" id="ASU91374.1"/>
    </source>
</evidence>
<reference evidence="6" key="1">
    <citation type="journal article" date="2017" name="Fish Shellfish Immunol.">
        <title>cDNA cloning, expression and immune function analysis of a novel Rac1 gene (AjRac1) in the sea cucumber Apostichopus japonicus.</title>
        <authorList>
            <person name="Li K."/>
            <person name="Liu L."/>
            <person name="Shang S."/>
            <person name="Wang Y."/>
            <person name="Zhan Y."/>
            <person name="Song J."/>
            <person name="Zhang X."/>
            <person name="Chang Y."/>
        </authorList>
    </citation>
    <scope>NUCLEOTIDE SEQUENCE [MRNA]</scope>
    <scope>TISSUE SPECIFICITY</scope>
    <scope>DEVELOPMENTAL STAGE</scope>
    <scope>INDUCTION</scope>
</reference>
<organism evidence="6">
    <name type="scientific">Stichopus japonicus</name>
    <name type="common">Sea cucumber</name>
    <dbReference type="NCBI Taxonomy" id="307972"/>
    <lineage>
        <taxon>Eukaryota</taxon>
        <taxon>Metazoa</taxon>
        <taxon>Echinodermata</taxon>
        <taxon>Eleutherozoa</taxon>
        <taxon>Echinozoa</taxon>
        <taxon>Holothuroidea</taxon>
        <taxon>Aspidochirotacea</taxon>
        <taxon>Aspidochirotida</taxon>
        <taxon>Stichopodidae</taxon>
        <taxon>Apostichopus</taxon>
    </lineage>
</organism>
<comment type="function">
    <text evidence="2">Plasma membrane-associated small GTPase which cycles between active GTP-bound and inactive GDP-bound states.</text>
</comment>
<comment type="subcellular location">
    <subcellularLocation>
        <location evidence="2">Cell membrane</location>
        <topology evidence="2">Lipid-anchor</topology>
        <orientation evidence="2">Cytoplasmic side</orientation>
    </subcellularLocation>
</comment>
<comment type="tissue specificity">
    <text evidence="3">Highly expressed in respiratory tubes and coelomocytes. Moderate expression in intestinal tissue and body wall. Low expression in tube feet and longitudinal muscle.</text>
</comment>
<comment type="developmental stage">
    <text evidence="3">Highly expressed in the blastula stage with reduced expression through the rest of development.</text>
</comment>
<comment type="induction">
    <text evidence="3">By infection with the Gram-negative bacterium V.splendidus. Following infection, expression is significantly increased at 4 hours (approximately 15-fold above control), then decreases to control levels at 8 hours. Expression increases 2-fold above control 12 hours post infection and remains constant till 48 hours post expression. By 72 hours, expression returns to control levels.</text>
</comment>
<comment type="similarity">
    <text evidence="5">Belongs to the small GTPase superfamily. Rho family.</text>
</comment>
<dbReference type="EMBL" id="MF196911">
    <property type="protein sequence ID" value="ASU91374.1"/>
    <property type="molecule type" value="mRNA"/>
</dbReference>
<dbReference type="SMR" id="A0A286QZ36"/>
<dbReference type="GO" id="GO:0005886">
    <property type="term" value="C:plasma membrane"/>
    <property type="evidence" value="ECO:0007669"/>
    <property type="project" value="UniProtKB-SubCell"/>
</dbReference>
<dbReference type="GO" id="GO:0005525">
    <property type="term" value="F:GTP binding"/>
    <property type="evidence" value="ECO:0007669"/>
    <property type="project" value="UniProtKB-KW"/>
</dbReference>
<dbReference type="GO" id="GO:0003924">
    <property type="term" value="F:GTPase activity"/>
    <property type="evidence" value="ECO:0007669"/>
    <property type="project" value="InterPro"/>
</dbReference>
<dbReference type="GO" id="GO:0050829">
    <property type="term" value="P:defense response to Gram-negative bacterium"/>
    <property type="evidence" value="ECO:0000314"/>
    <property type="project" value="UniProtKB"/>
</dbReference>
<dbReference type="GO" id="GO:0045087">
    <property type="term" value="P:innate immune response"/>
    <property type="evidence" value="ECO:0000314"/>
    <property type="project" value="UniProtKB"/>
</dbReference>
<dbReference type="GO" id="GO:0007264">
    <property type="term" value="P:small GTPase-mediated signal transduction"/>
    <property type="evidence" value="ECO:0007669"/>
    <property type="project" value="InterPro"/>
</dbReference>
<dbReference type="CDD" id="cd01871">
    <property type="entry name" value="Rac1_like"/>
    <property type="match status" value="1"/>
</dbReference>
<dbReference type="FunFam" id="3.40.50.300:FF:000088">
    <property type="entry name" value="Ras-related C3 botulinum toxin substrate 1"/>
    <property type="match status" value="1"/>
</dbReference>
<dbReference type="Gene3D" id="3.40.50.300">
    <property type="entry name" value="P-loop containing nucleotide triphosphate hydrolases"/>
    <property type="match status" value="1"/>
</dbReference>
<dbReference type="InterPro" id="IPR027417">
    <property type="entry name" value="P-loop_NTPase"/>
</dbReference>
<dbReference type="InterPro" id="IPR005225">
    <property type="entry name" value="Small_GTP-bd"/>
</dbReference>
<dbReference type="InterPro" id="IPR001806">
    <property type="entry name" value="Small_GTPase"/>
</dbReference>
<dbReference type="InterPro" id="IPR003578">
    <property type="entry name" value="Small_GTPase_Rho"/>
</dbReference>
<dbReference type="NCBIfam" id="TIGR00231">
    <property type="entry name" value="small_GTP"/>
    <property type="match status" value="1"/>
</dbReference>
<dbReference type="PANTHER" id="PTHR24072">
    <property type="entry name" value="RHO FAMILY GTPASE"/>
    <property type="match status" value="1"/>
</dbReference>
<dbReference type="Pfam" id="PF00071">
    <property type="entry name" value="Ras"/>
    <property type="match status" value="1"/>
</dbReference>
<dbReference type="PRINTS" id="PR00449">
    <property type="entry name" value="RASTRNSFRMNG"/>
</dbReference>
<dbReference type="SMART" id="SM00175">
    <property type="entry name" value="RAB"/>
    <property type="match status" value="1"/>
</dbReference>
<dbReference type="SMART" id="SM00173">
    <property type="entry name" value="RAS"/>
    <property type="match status" value="1"/>
</dbReference>
<dbReference type="SMART" id="SM00174">
    <property type="entry name" value="RHO"/>
    <property type="match status" value="1"/>
</dbReference>
<dbReference type="SUPFAM" id="SSF52540">
    <property type="entry name" value="P-loop containing nucleoside triphosphate hydrolases"/>
    <property type="match status" value="1"/>
</dbReference>
<dbReference type="PROSITE" id="PS51420">
    <property type="entry name" value="RHO"/>
    <property type="match status" value="1"/>
</dbReference>
<proteinExistence type="evidence at transcript level"/>
<sequence>MQAIKCVVVGDGAVGKTCLLISYTTNAFPGEYIPTVFDNYSANVMVDGRPVNLGLWDTAGQEDYDRLRPLSYPQTDVFLICFSLVSPASYENVRTKWYPEVSHHCPSTPIILVGTKLDLRDDKETMNKLSERSLRPIAYPQGLQMQKEIHAVKYLECSALTQKGLKTVFDEAIRAVLCPPAKNKSKRSCQLL</sequence>